<gene>
    <name type="primary">rps18</name>
</gene>
<evidence type="ECO:0000305" key="1"/>
<accession>Q06J55</accession>
<name>RR18_BIGNA</name>
<proteinExistence type="inferred from homology"/>
<keyword id="KW-0150">Chloroplast</keyword>
<keyword id="KW-0934">Plastid</keyword>
<keyword id="KW-0687">Ribonucleoprotein</keyword>
<keyword id="KW-0689">Ribosomal protein</keyword>
<keyword id="KW-0694">RNA-binding</keyword>
<keyword id="KW-0699">rRNA-binding</keyword>
<dbReference type="EMBL" id="DQ851108">
    <property type="protein sequence ID" value="ABG91404.1"/>
    <property type="molecule type" value="Genomic_DNA"/>
</dbReference>
<dbReference type="RefSeq" id="YP_778572.1">
    <property type="nucleotide sequence ID" value="NC_008408.1"/>
</dbReference>
<dbReference type="SMR" id="Q06J55"/>
<dbReference type="GeneID" id="4352989"/>
<dbReference type="GO" id="GO:0009507">
    <property type="term" value="C:chloroplast"/>
    <property type="evidence" value="ECO:0007669"/>
    <property type="project" value="UniProtKB-SubCell"/>
</dbReference>
<dbReference type="GO" id="GO:0005763">
    <property type="term" value="C:mitochondrial small ribosomal subunit"/>
    <property type="evidence" value="ECO:0007669"/>
    <property type="project" value="TreeGrafter"/>
</dbReference>
<dbReference type="GO" id="GO:0070181">
    <property type="term" value="F:small ribosomal subunit rRNA binding"/>
    <property type="evidence" value="ECO:0007669"/>
    <property type="project" value="TreeGrafter"/>
</dbReference>
<dbReference type="GO" id="GO:0003735">
    <property type="term" value="F:structural constituent of ribosome"/>
    <property type="evidence" value="ECO:0007669"/>
    <property type="project" value="InterPro"/>
</dbReference>
<dbReference type="GO" id="GO:0006412">
    <property type="term" value="P:translation"/>
    <property type="evidence" value="ECO:0007669"/>
    <property type="project" value="InterPro"/>
</dbReference>
<dbReference type="Gene3D" id="4.10.640.10">
    <property type="entry name" value="Ribosomal protein S18"/>
    <property type="match status" value="1"/>
</dbReference>
<dbReference type="InterPro" id="IPR001648">
    <property type="entry name" value="Ribosomal_bS18"/>
</dbReference>
<dbReference type="InterPro" id="IPR036870">
    <property type="entry name" value="Ribosomal_bS18_sf"/>
</dbReference>
<dbReference type="NCBIfam" id="TIGR00165">
    <property type="entry name" value="S18"/>
    <property type="match status" value="1"/>
</dbReference>
<dbReference type="PANTHER" id="PTHR13479">
    <property type="entry name" value="30S RIBOSOMAL PROTEIN S18"/>
    <property type="match status" value="1"/>
</dbReference>
<dbReference type="PANTHER" id="PTHR13479:SF40">
    <property type="entry name" value="SMALL RIBOSOMAL SUBUNIT PROTEIN BS18M"/>
    <property type="match status" value="1"/>
</dbReference>
<dbReference type="Pfam" id="PF01084">
    <property type="entry name" value="Ribosomal_S18"/>
    <property type="match status" value="1"/>
</dbReference>
<dbReference type="PRINTS" id="PR00974">
    <property type="entry name" value="RIBOSOMALS18"/>
</dbReference>
<dbReference type="SUPFAM" id="SSF46911">
    <property type="entry name" value="Ribosomal protein S18"/>
    <property type="match status" value="1"/>
</dbReference>
<protein>
    <recommendedName>
        <fullName evidence="1">Small ribosomal subunit protein bS18c</fullName>
    </recommendedName>
    <alternativeName>
        <fullName>30S ribosomal protein S18, chloroplastic</fullName>
    </alternativeName>
</protein>
<organism>
    <name type="scientific">Bigelowiella natans</name>
    <name type="common">Pedinomonas minutissima</name>
    <name type="synonym">Chlorarachnion sp. (strain CCMP621)</name>
    <dbReference type="NCBI Taxonomy" id="227086"/>
    <lineage>
        <taxon>Eukaryota</taxon>
        <taxon>Sar</taxon>
        <taxon>Rhizaria</taxon>
        <taxon>Cercozoa</taxon>
        <taxon>Chlorarachniophyceae</taxon>
        <taxon>Bigelowiella</taxon>
    </lineage>
</organism>
<feature type="chain" id="PRO_0000310403" description="Small ribosomal subunit protein bS18c">
    <location>
        <begin position="1"/>
        <end position="64"/>
    </location>
</feature>
<comment type="subunit">
    <text>Part of the 30S ribosomal subunit.</text>
</comment>
<comment type="subcellular location">
    <subcellularLocation>
        <location>Plastid</location>
        <location>Chloroplast</location>
    </subcellularLocation>
</comment>
<comment type="similarity">
    <text evidence="1">Belongs to the bacterial ribosomal protein bS18 family.</text>
</comment>
<sequence>MKNLEIKRHYNLDYKNTNLLKKFVSVDGKILPKYITVLKPKNQRKLSKAIKLSRIAGLLKFLNN</sequence>
<reference key="1">
    <citation type="journal article" date="2007" name="Mol. Biol. Evol.">
        <title>The complete chloroplast genome of the chlorarachniophyte Bigelowiella natans: evidence for independent origins of chlorarachniophyte and euglenid secondary endosymbionts.</title>
        <authorList>
            <person name="Rogers M.B."/>
            <person name="Gilson P.R."/>
            <person name="Su V."/>
            <person name="McFadden G.I."/>
            <person name="Keeling P.J."/>
        </authorList>
    </citation>
    <scope>NUCLEOTIDE SEQUENCE [LARGE SCALE GENOMIC DNA]</scope>
</reference>
<geneLocation type="chloroplast"/>